<reference key="1">
    <citation type="journal article" date="1998" name="Proc. Natl. Acad. Sci. U.S.A.">
        <title>A PII-like protein in Arabidopsis: putative role in nitrogen sensing.</title>
        <authorList>
            <person name="Hsieh M.H."/>
            <person name="Lam H.M."/>
            <person name="van de Loo F.J."/>
            <person name="Coruzzi G."/>
        </authorList>
    </citation>
    <scope>NUCLEOTIDE SEQUENCE [GENOMIC DNA / MRNA]</scope>
    <scope>FUNCTION</scope>
    <scope>SUBCELLULAR LOCATION</scope>
    <scope>INDUCTION</scope>
</reference>
<reference key="2">
    <citation type="journal article" date="1999" name="Nature">
        <title>Sequence and analysis of chromosome 4 of the plant Arabidopsis thaliana.</title>
        <authorList>
            <person name="Mayer K.F.X."/>
            <person name="Schueller C."/>
            <person name="Wambutt R."/>
            <person name="Murphy G."/>
            <person name="Volckaert G."/>
            <person name="Pohl T."/>
            <person name="Duesterhoeft A."/>
            <person name="Stiekema W."/>
            <person name="Entian K.-D."/>
            <person name="Terryn N."/>
            <person name="Harris B."/>
            <person name="Ansorge W."/>
            <person name="Brandt P."/>
            <person name="Grivell L.A."/>
            <person name="Rieger M."/>
            <person name="Weichselgartner M."/>
            <person name="de Simone V."/>
            <person name="Obermaier B."/>
            <person name="Mache R."/>
            <person name="Mueller M."/>
            <person name="Kreis M."/>
            <person name="Delseny M."/>
            <person name="Puigdomenech P."/>
            <person name="Watson M."/>
            <person name="Schmidtheini T."/>
            <person name="Reichert B."/>
            <person name="Portetelle D."/>
            <person name="Perez-Alonso M."/>
            <person name="Boutry M."/>
            <person name="Bancroft I."/>
            <person name="Vos P."/>
            <person name="Hoheisel J."/>
            <person name="Zimmermann W."/>
            <person name="Wedler H."/>
            <person name="Ridley P."/>
            <person name="Langham S.-A."/>
            <person name="McCullagh B."/>
            <person name="Bilham L."/>
            <person name="Robben J."/>
            <person name="van der Schueren J."/>
            <person name="Grymonprez B."/>
            <person name="Chuang Y.-J."/>
            <person name="Vandenbussche F."/>
            <person name="Braeken M."/>
            <person name="Weltjens I."/>
            <person name="Voet M."/>
            <person name="Bastiaens I."/>
            <person name="Aert R."/>
            <person name="Defoor E."/>
            <person name="Weitzenegger T."/>
            <person name="Bothe G."/>
            <person name="Ramsperger U."/>
            <person name="Hilbert H."/>
            <person name="Braun M."/>
            <person name="Holzer E."/>
            <person name="Brandt A."/>
            <person name="Peters S."/>
            <person name="van Staveren M."/>
            <person name="Dirkse W."/>
            <person name="Mooijman P."/>
            <person name="Klein Lankhorst R."/>
            <person name="Rose M."/>
            <person name="Hauf J."/>
            <person name="Koetter P."/>
            <person name="Berneiser S."/>
            <person name="Hempel S."/>
            <person name="Feldpausch M."/>
            <person name="Lamberth S."/>
            <person name="Van den Daele H."/>
            <person name="De Keyser A."/>
            <person name="Buysshaert C."/>
            <person name="Gielen J."/>
            <person name="Villarroel R."/>
            <person name="De Clercq R."/>
            <person name="van Montagu M."/>
            <person name="Rogers J."/>
            <person name="Cronin A."/>
            <person name="Quail M.A."/>
            <person name="Bray-Allen S."/>
            <person name="Clark L."/>
            <person name="Doggett J."/>
            <person name="Hall S."/>
            <person name="Kay M."/>
            <person name="Lennard N."/>
            <person name="McLay K."/>
            <person name="Mayes R."/>
            <person name="Pettett A."/>
            <person name="Rajandream M.A."/>
            <person name="Lyne M."/>
            <person name="Benes V."/>
            <person name="Rechmann S."/>
            <person name="Borkova D."/>
            <person name="Bloecker H."/>
            <person name="Scharfe M."/>
            <person name="Grimm M."/>
            <person name="Loehnert T.-H."/>
            <person name="Dose S."/>
            <person name="de Haan M."/>
            <person name="Maarse A.C."/>
            <person name="Schaefer M."/>
            <person name="Mueller-Auer S."/>
            <person name="Gabel C."/>
            <person name="Fuchs M."/>
            <person name="Fartmann B."/>
            <person name="Granderath K."/>
            <person name="Dauner D."/>
            <person name="Herzl A."/>
            <person name="Neumann S."/>
            <person name="Argiriou A."/>
            <person name="Vitale D."/>
            <person name="Liguori R."/>
            <person name="Piravandi E."/>
            <person name="Massenet O."/>
            <person name="Quigley F."/>
            <person name="Clabauld G."/>
            <person name="Muendlein A."/>
            <person name="Felber R."/>
            <person name="Schnabl S."/>
            <person name="Hiller R."/>
            <person name="Schmidt W."/>
            <person name="Lecharny A."/>
            <person name="Aubourg S."/>
            <person name="Chefdor F."/>
            <person name="Cooke R."/>
            <person name="Berger C."/>
            <person name="Monfort A."/>
            <person name="Casacuberta E."/>
            <person name="Gibbons T."/>
            <person name="Weber N."/>
            <person name="Vandenbol M."/>
            <person name="Bargues M."/>
            <person name="Terol J."/>
            <person name="Torres A."/>
            <person name="Perez-Perez A."/>
            <person name="Purnelle B."/>
            <person name="Bent E."/>
            <person name="Johnson S."/>
            <person name="Tacon D."/>
            <person name="Jesse T."/>
            <person name="Heijnen L."/>
            <person name="Schwarz S."/>
            <person name="Scholler P."/>
            <person name="Heber S."/>
            <person name="Francs P."/>
            <person name="Bielke C."/>
            <person name="Frishman D."/>
            <person name="Haase D."/>
            <person name="Lemcke K."/>
            <person name="Mewes H.-W."/>
            <person name="Stocker S."/>
            <person name="Zaccaria P."/>
            <person name="Bevan M."/>
            <person name="Wilson R.K."/>
            <person name="de la Bastide M."/>
            <person name="Habermann K."/>
            <person name="Parnell L."/>
            <person name="Dedhia N."/>
            <person name="Gnoj L."/>
            <person name="Schutz K."/>
            <person name="Huang E."/>
            <person name="Spiegel L."/>
            <person name="Sekhon M."/>
            <person name="Murray J."/>
            <person name="Sheet P."/>
            <person name="Cordes M."/>
            <person name="Abu-Threideh J."/>
            <person name="Stoneking T."/>
            <person name="Kalicki J."/>
            <person name="Graves T."/>
            <person name="Harmon G."/>
            <person name="Edwards J."/>
            <person name="Latreille P."/>
            <person name="Courtney L."/>
            <person name="Cloud J."/>
            <person name="Abbott A."/>
            <person name="Scott K."/>
            <person name="Johnson D."/>
            <person name="Minx P."/>
            <person name="Bentley D."/>
            <person name="Fulton B."/>
            <person name="Miller N."/>
            <person name="Greco T."/>
            <person name="Kemp K."/>
            <person name="Kramer J."/>
            <person name="Fulton L."/>
            <person name="Mardis E."/>
            <person name="Dante M."/>
            <person name="Pepin K."/>
            <person name="Hillier L.W."/>
            <person name="Nelson J."/>
            <person name="Spieth J."/>
            <person name="Ryan E."/>
            <person name="Andrews S."/>
            <person name="Geisel C."/>
            <person name="Layman D."/>
            <person name="Du H."/>
            <person name="Ali J."/>
            <person name="Berghoff A."/>
            <person name="Jones K."/>
            <person name="Drone K."/>
            <person name="Cotton M."/>
            <person name="Joshu C."/>
            <person name="Antonoiu B."/>
            <person name="Zidanic M."/>
            <person name="Strong C."/>
            <person name="Sun H."/>
            <person name="Lamar B."/>
            <person name="Yordan C."/>
            <person name="Ma P."/>
            <person name="Zhong J."/>
            <person name="Preston R."/>
            <person name="Vil D."/>
            <person name="Shekher M."/>
            <person name="Matero A."/>
            <person name="Shah R."/>
            <person name="Swaby I.K."/>
            <person name="O'Shaughnessy A."/>
            <person name="Rodriguez M."/>
            <person name="Hoffman J."/>
            <person name="Till S."/>
            <person name="Granat S."/>
            <person name="Shohdy N."/>
            <person name="Hasegawa A."/>
            <person name="Hameed A."/>
            <person name="Lodhi M."/>
            <person name="Johnson A."/>
            <person name="Chen E."/>
            <person name="Marra M.A."/>
            <person name="Martienssen R."/>
            <person name="McCombie W.R."/>
        </authorList>
    </citation>
    <scope>NUCLEOTIDE SEQUENCE [LARGE SCALE GENOMIC DNA]</scope>
    <source>
        <strain>cv. Columbia</strain>
    </source>
</reference>
<reference key="3">
    <citation type="journal article" date="2017" name="Plant J.">
        <title>Araport11: a complete reannotation of the Arabidopsis thaliana reference genome.</title>
        <authorList>
            <person name="Cheng C.Y."/>
            <person name="Krishnakumar V."/>
            <person name="Chan A.P."/>
            <person name="Thibaud-Nissen F."/>
            <person name="Schobel S."/>
            <person name="Town C.D."/>
        </authorList>
    </citation>
    <scope>GENOME REANNOTATION</scope>
    <source>
        <strain>cv. Columbia</strain>
    </source>
</reference>
<reference key="4">
    <citation type="journal article" date="2003" name="Science">
        <title>Empirical analysis of transcriptional activity in the Arabidopsis genome.</title>
        <authorList>
            <person name="Yamada K."/>
            <person name="Lim J."/>
            <person name="Dale J.M."/>
            <person name="Chen H."/>
            <person name="Shinn P."/>
            <person name="Palm C.J."/>
            <person name="Southwick A.M."/>
            <person name="Wu H.C."/>
            <person name="Kim C.J."/>
            <person name="Nguyen M."/>
            <person name="Pham P.K."/>
            <person name="Cheuk R.F."/>
            <person name="Karlin-Newmann G."/>
            <person name="Liu S.X."/>
            <person name="Lam B."/>
            <person name="Sakano H."/>
            <person name="Wu T."/>
            <person name="Yu G."/>
            <person name="Miranda M."/>
            <person name="Quach H.L."/>
            <person name="Tripp M."/>
            <person name="Chang C.H."/>
            <person name="Lee J.M."/>
            <person name="Toriumi M.J."/>
            <person name="Chan M.M."/>
            <person name="Tang C.C."/>
            <person name="Onodera C.S."/>
            <person name="Deng J.M."/>
            <person name="Akiyama K."/>
            <person name="Ansari Y."/>
            <person name="Arakawa T."/>
            <person name="Banh J."/>
            <person name="Banno F."/>
            <person name="Bowser L."/>
            <person name="Brooks S.Y."/>
            <person name="Carninci P."/>
            <person name="Chao Q."/>
            <person name="Choy N."/>
            <person name="Enju A."/>
            <person name="Goldsmith A.D."/>
            <person name="Gurjal M."/>
            <person name="Hansen N.F."/>
            <person name="Hayashizaki Y."/>
            <person name="Johnson-Hopson C."/>
            <person name="Hsuan V.W."/>
            <person name="Iida K."/>
            <person name="Karnes M."/>
            <person name="Khan S."/>
            <person name="Koesema E."/>
            <person name="Ishida J."/>
            <person name="Jiang P.X."/>
            <person name="Jones T."/>
            <person name="Kawai J."/>
            <person name="Kamiya A."/>
            <person name="Meyers C."/>
            <person name="Nakajima M."/>
            <person name="Narusaka M."/>
            <person name="Seki M."/>
            <person name="Sakurai T."/>
            <person name="Satou M."/>
            <person name="Tamse R."/>
            <person name="Vaysberg M."/>
            <person name="Wallender E.K."/>
            <person name="Wong C."/>
            <person name="Yamamura Y."/>
            <person name="Yuan S."/>
            <person name="Shinozaki K."/>
            <person name="Davis R.W."/>
            <person name="Theologis A."/>
            <person name="Ecker J.R."/>
        </authorList>
    </citation>
    <scope>NUCLEOTIDE SEQUENCE [LARGE SCALE MRNA]</scope>
    <source>
        <strain>cv. Columbia</strain>
    </source>
</reference>
<reference key="5">
    <citation type="submission" date="2006-07" db="EMBL/GenBank/DDBJ databases">
        <title>Large-scale analysis of RIKEN Arabidopsis full-length (RAFL) cDNAs.</title>
        <authorList>
            <person name="Totoki Y."/>
            <person name="Seki M."/>
            <person name="Ishida J."/>
            <person name="Nakajima M."/>
            <person name="Enju A."/>
            <person name="Kamiya A."/>
            <person name="Narusaka M."/>
            <person name="Shin-i T."/>
            <person name="Nakagawa M."/>
            <person name="Sakamoto N."/>
            <person name="Oishi K."/>
            <person name="Kohara Y."/>
            <person name="Kobayashi M."/>
            <person name="Toyoda A."/>
            <person name="Sakaki Y."/>
            <person name="Sakurai T."/>
            <person name="Iida K."/>
            <person name="Akiyama K."/>
            <person name="Satou M."/>
            <person name="Toyoda T."/>
            <person name="Konagaya A."/>
            <person name="Carninci P."/>
            <person name="Kawai J."/>
            <person name="Hayashizaki Y."/>
            <person name="Shinozaki K."/>
        </authorList>
    </citation>
    <scope>NUCLEOTIDE SEQUENCE [LARGE SCALE MRNA]</scope>
    <source>
        <strain>cv. Columbia</strain>
    </source>
</reference>
<reference key="6">
    <citation type="journal article" date="2005" name="Planta">
        <title>Physiological characterisation of Arabidopsis mutants affected in the expression of the putative regulatory protein PII.</title>
        <authorList>
            <person name="Ferrario-Mery S."/>
            <person name="Bouvet M."/>
            <person name="Leleu O."/>
            <person name="Savino G."/>
            <person name="Hodges M."/>
            <person name="Meyer C."/>
        </authorList>
    </citation>
    <scope>FUNCTION</scope>
    <scope>DISRUPTION PHENOTYPE</scope>
</reference>
<reference key="7">
    <citation type="journal article" date="2006" name="J. Biol. Chem.">
        <title>The PII signal transduction protein of Arabidopsis thaliana forms an arginine-regulated complex with plastid N-acetyl glutamate kinase.</title>
        <authorList>
            <person name="Chen Y.M."/>
            <person name="Ferrar T.S."/>
            <person name="Lohmeier-Vogel E.M."/>
            <person name="Lohmeir-Vogel E."/>
            <person name="Morrice N."/>
            <person name="Mizuno Y."/>
            <person name="Berenger B."/>
            <person name="Ng K.K."/>
            <person name="Muench D.G."/>
            <person name="Moorhead G.B."/>
        </authorList>
    </citation>
    <scope>INTERACTION WITH NAGK</scope>
    <scope>SUBCELLULAR LOCATION</scope>
</reference>
<reference key="8">
    <citation type="journal article" date="2008" name="FEBS Lett.">
        <title>Chloroplast nitrite uptake is enhanced in Arabidopsis PII mutants.</title>
        <authorList>
            <person name="Ferrario-Mery S."/>
            <person name="Meyer C."/>
            <person name="Hodges M."/>
        </authorList>
    </citation>
    <scope>FUNCTION</scope>
</reference>
<reference key="9">
    <citation type="journal article" date="2007" name="Biochemistry">
        <title>Crystal structure of Arabidopsis PII reveals novel structural elements unique to plants.</title>
        <authorList>
            <person name="Mizuno Y."/>
            <person name="Berenger B."/>
            <person name="Moorhead G.B."/>
            <person name="Ng K.K."/>
        </authorList>
    </citation>
    <scope>X-RAY CRYSTALLOGRAPHY (1.9 ANGSTROMS) OF 63-196</scope>
</reference>
<reference key="10">
    <citation type="journal article" date="2007" name="J. Biol. Chem.">
        <title>Structural basis for the regulation of N-acetylglutamate kinase by PII in Arabidopsis thaliana.</title>
        <authorList>
            <person name="Mizuno Y."/>
            <person name="Moorhead G.B."/>
            <person name="Ng K.K."/>
        </authorList>
    </citation>
    <scope>X-RAY CRYSTALLOGRAPHY (2.51 ANGSTROMS) OF 63-196 IN COMPLEX WITH ADP AND MAGNESIUM</scope>
    <scope>SUBUNIT</scope>
</reference>
<name>GLNB_ARATH</name>
<gene>
    <name type="primary">GLB1</name>
    <name type="synonym">GLNB1</name>
    <name type="ordered locus">At4g01900</name>
    <name type="ORF">T7B11.16</name>
</gene>
<accession>Q9ZST4</accession>
<feature type="transit peptide" description="Chloroplast" evidence="1">
    <location>
        <begin position="1"/>
        <end position="61"/>
    </location>
</feature>
<feature type="chain" id="PRO_0000401368" description="Nitrogen regulatory protein P-II homolog">
    <location>
        <begin position="62"/>
        <end position="196"/>
    </location>
</feature>
<feature type="binding site">
    <location>
        <begin position="108"/>
        <end position="112"/>
    </location>
    <ligand>
        <name>ATP</name>
        <dbReference type="ChEBI" id="CHEBI:30616"/>
    </ligand>
</feature>
<feature type="binding site" evidence="5">
    <location>
        <position position="110"/>
    </location>
    <ligand>
        <name>Mg(2+)</name>
        <dbReference type="ChEBI" id="CHEBI:18420"/>
    </ligand>
</feature>
<feature type="binding site">
    <location>
        <begin position="161"/>
        <end position="164"/>
    </location>
    <ligand>
        <name>ATP</name>
        <dbReference type="ChEBI" id="CHEBI:30616"/>
    </ligand>
</feature>
<feature type="strand" evidence="8">
    <location>
        <begin position="73"/>
        <end position="81"/>
    </location>
</feature>
<feature type="helix" evidence="8">
    <location>
        <begin position="83"/>
        <end position="85"/>
    </location>
</feature>
<feature type="helix" evidence="8">
    <location>
        <begin position="86"/>
        <end position="95"/>
    </location>
</feature>
<feature type="strand" evidence="8">
    <location>
        <begin position="102"/>
        <end position="108"/>
    </location>
</feature>
<feature type="strand" evidence="9">
    <location>
        <begin position="117"/>
        <end position="119"/>
    </location>
</feature>
<feature type="strand" evidence="9">
    <location>
        <begin position="122"/>
        <end position="124"/>
    </location>
</feature>
<feature type="strand" evidence="8">
    <location>
        <begin position="130"/>
        <end position="140"/>
    </location>
</feature>
<feature type="helix" evidence="8">
    <location>
        <begin position="141"/>
        <end position="143"/>
    </location>
</feature>
<feature type="helix" evidence="8">
    <location>
        <begin position="144"/>
        <end position="155"/>
    </location>
</feature>
<feature type="strand" evidence="8">
    <location>
        <begin position="164"/>
        <end position="170"/>
    </location>
</feature>
<feature type="strand" evidence="8">
    <location>
        <begin position="172"/>
        <end position="175"/>
    </location>
</feature>
<feature type="turn" evidence="8">
    <location>
        <begin position="176"/>
        <end position="178"/>
    </location>
</feature>
<feature type="helix" evidence="8">
    <location>
        <begin position="182"/>
        <end position="184"/>
    </location>
</feature>
<dbReference type="EMBL" id="AF095455">
    <property type="protein sequence ID" value="AAC78333.1"/>
    <property type="molecule type" value="mRNA"/>
</dbReference>
<dbReference type="EMBL" id="AC007138">
    <property type="protein sequence ID" value="AAD22652.1"/>
    <property type="molecule type" value="Genomic_DNA"/>
</dbReference>
<dbReference type="EMBL" id="AL161493">
    <property type="protein sequence ID" value="CAB80683.1"/>
    <property type="molecule type" value="Genomic_DNA"/>
</dbReference>
<dbReference type="EMBL" id="CP002687">
    <property type="protein sequence ID" value="AEE82094.1"/>
    <property type="molecule type" value="Genomic_DNA"/>
</dbReference>
<dbReference type="EMBL" id="BT005209">
    <property type="protein sequence ID" value="AAO63273.1"/>
    <property type="molecule type" value="mRNA"/>
</dbReference>
<dbReference type="EMBL" id="AK228189">
    <property type="protein sequence ID" value="BAF00143.1"/>
    <property type="molecule type" value="mRNA"/>
</dbReference>
<dbReference type="PIR" id="D85024">
    <property type="entry name" value="D85024"/>
</dbReference>
<dbReference type="RefSeq" id="NP_192099.1">
    <property type="nucleotide sequence ID" value="NM_116421.4"/>
</dbReference>
<dbReference type="PDB" id="2O66">
    <property type="method" value="X-ray"/>
    <property type="resolution" value="1.90 A"/>
    <property type="chains" value="A/B/C=63-196"/>
</dbReference>
<dbReference type="PDB" id="2O67">
    <property type="method" value="X-ray"/>
    <property type="resolution" value="2.50 A"/>
    <property type="chains" value="A/B/C=63-196"/>
</dbReference>
<dbReference type="PDB" id="2RD5">
    <property type="method" value="X-ray"/>
    <property type="resolution" value="2.51 A"/>
    <property type="chains" value="C/D=63-196"/>
</dbReference>
<dbReference type="PDBsum" id="2O66"/>
<dbReference type="PDBsum" id="2O67"/>
<dbReference type="PDBsum" id="2RD5"/>
<dbReference type="SMR" id="Q9ZST4"/>
<dbReference type="BioGRID" id="13502">
    <property type="interactions" value="7"/>
</dbReference>
<dbReference type="DIP" id="DIP-35001N"/>
<dbReference type="FunCoup" id="Q9ZST4">
    <property type="interactions" value="277"/>
</dbReference>
<dbReference type="IntAct" id="Q9ZST4">
    <property type="interactions" value="13"/>
</dbReference>
<dbReference type="STRING" id="3702.Q9ZST4"/>
<dbReference type="MetOSite" id="Q9ZST4"/>
<dbReference type="PaxDb" id="3702-AT4G01900.1"/>
<dbReference type="ProteomicsDB" id="247133"/>
<dbReference type="EnsemblPlants" id="AT4G01900.1">
    <property type="protein sequence ID" value="AT4G01900.1"/>
    <property type="gene ID" value="AT4G01900"/>
</dbReference>
<dbReference type="GeneID" id="828213"/>
<dbReference type="Gramene" id="AT4G01900.1">
    <property type="protein sequence ID" value="AT4G01900.1"/>
    <property type="gene ID" value="AT4G01900"/>
</dbReference>
<dbReference type="KEGG" id="ath:AT4G01900"/>
<dbReference type="Araport" id="AT4G01900"/>
<dbReference type="TAIR" id="AT4G01900">
    <property type="gene designation" value="GLB1"/>
</dbReference>
<dbReference type="eggNOG" id="ENOG502RUKA">
    <property type="taxonomic scope" value="Eukaryota"/>
</dbReference>
<dbReference type="HOGENOM" id="CLU_082268_1_1_1"/>
<dbReference type="InParanoid" id="Q9ZST4"/>
<dbReference type="OMA" id="NTRVSHL"/>
<dbReference type="PhylomeDB" id="Q9ZST4"/>
<dbReference type="SABIO-RK" id="Q9ZST4"/>
<dbReference type="CD-CODE" id="4299E36E">
    <property type="entry name" value="Nucleolus"/>
</dbReference>
<dbReference type="EvolutionaryTrace" id="Q9ZST4"/>
<dbReference type="PRO" id="PR:Q9ZST4"/>
<dbReference type="Proteomes" id="UP000006548">
    <property type="component" value="Chromosome 4"/>
</dbReference>
<dbReference type="ExpressionAtlas" id="Q9ZST4">
    <property type="expression patterns" value="baseline and differential"/>
</dbReference>
<dbReference type="GO" id="GO:0009507">
    <property type="term" value="C:chloroplast"/>
    <property type="evidence" value="ECO:0000314"/>
    <property type="project" value="TAIR"/>
</dbReference>
<dbReference type="GO" id="GO:0009534">
    <property type="term" value="C:chloroplast thylakoid"/>
    <property type="evidence" value="ECO:0007005"/>
    <property type="project" value="TAIR"/>
</dbReference>
<dbReference type="GO" id="GO:0005829">
    <property type="term" value="C:cytosol"/>
    <property type="evidence" value="ECO:0007005"/>
    <property type="project" value="TAIR"/>
</dbReference>
<dbReference type="GO" id="GO:0009536">
    <property type="term" value="C:plastid"/>
    <property type="evidence" value="ECO:0000314"/>
    <property type="project" value="TAIR"/>
</dbReference>
<dbReference type="GO" id="GO:0010307">
    <property type="term" value="F:acetylglutamate kinase regulator activity"/>
    <property type="evidence" value="ECO:0000314"/>
    <property type="project" value="TAIR"/>
</dbReference>
<dbReference type="GO" id="GO:0005524">
    <property type="term" value="F:ATP binding"/>
    <property type="evidence" value="ECO:0000314"/>
    <property type="project" value="UniProtKB"/>
</dbReference>
<dbReference type="GO" id="GO:0000287">
    <property type="term" value="F:magnesium ion binding"/>
    <property type="evidence" value="ECO:0000314"/>
    <property type="project" value="UniProtKB"/>
</dbReference>
<dbReference type="GO" id="GO:0009718">
    <property type="term" value="P:anthocyanin-containing compound biosynthetic process"/>
    <property type="evidence" value="ECO:0000315"/>
    <property type="project" value="TAIR"/>
</dbReference>
<dbReference type="GO" id="GO:2000013">
    <property type="term" value="P:regulation of arginine biosynthetic process via ornithine"/>
    <property type="evidence" value="ECO:0000304"/>
    <property type="project" value="TAIR"/>
</dbReference>
<dbReference type="GO" id="GO:0042304">
    <property type="term" value="P:regulation of fatty acid biosynthetic process"/>
    <property type="evidence" value="ECO:0000315"/>
    <property type="project" value="TAIR"/>
</dbReference>
<dbReference type="GO" id="GO:0006808">
    <property type="term" value="P:regulation of nitrogen utilization"/>
    <property type="evidence" value="ECO:0007669"/>
    <property type="project" value="InterPro"/>
</dbReference>
<dbReference type="GO" id="GO:0009416">
    <property type="term" value="P:response to light stimulus"/>
    <property type="evidence" value="ECO:0000270"/>
    <property type="project" value="TAIR"/>
</dbReference>
<dbReference type="GO" id="GO:0009744">
    <property type="term" value="P:response to sucrose"/>
    <property type="evidence" value="ECO:0000270"/>
    <property type="project" value="TAIR"/>
</dbReference>
<dbReference type="FunFam" id="3.30.70.120:FF:000015">
    <property type="entry name" value="Nitrogen regulatory protein P-II homolog"/>
    <property type="match status" value="1"/>
</dbReference>
<dbReference type="Gene3D" id="3.30.70.120">
    <property type="match status" value="1"/>
</dbReference>
<dbReference type="InterPro" id="IPR002187">
    <property type="entry name" value="N-reg_PII"/>
</dbReference>
<dbReference type="InterPro" id="IPR011322">
    <property type="entry name" value="N-reg_PII-like_a/b"/>
</dbReference>
<dbReference type="InterPro" id="IPR015867">
    <property type="entry name" value="N-reg_PII/ATP_PRibTrfase_C"/>
</dbReference>
<dbReference type="InterPro" id="IPR017918">
    <property type="entry name" value="N-reg_PII_CS"/>
</dbReference>
<dbReference type="PANTHER" id="PTHR30115">
    <property type="entry name" value="NITROGEN REGULATORY PROTEIN P-II"/>
    <property type="match status" value="1"/>
</dbReference>
<dbReference type="PANTHER" id="PTHR30115:SF11">
    <property type="entry name" value="NITROGEN REGULATORY PROTEIN P-II HOMOLOG"/>
    <property type="match status" value="1"/>
</dbReference>
<dbReference type="Pfam" id="PF00543">
    <property type="entry name" value="P-II"/>
    <property type="match status" value="1"/>
</dbReference>
<dbReference type="PRINTS" id="PR00340">
    <property type="entry name" value="PIIGLNB"/>
</dbReference>
<dbReference type="SMART" id="SM00938">
    <property type="entry name" value="P-II"/>
    <property type="match status" value="1"/>
</dbReference>
<dbReference type="SUPFAM" id="SSF54913">
    <property type="entry name" value="GlnB-like"/>
    <property type="match status" value="1"/>
</dbReference>
<dbReference type="PROSITE" id="PS00638">
    <property type="entry name" value="PII_GLNB_CTER"/>
    <property type="match status" value="1"/>
</dbReference>
<dbReference type="PROSITE" id="PS51343">
    <property type="entry name" value="PII_GLNB_DOM"/>
    <property type="match status" value="1"/>
</dbReference>
<proteinExistence type="evidence at protein level"/>
<organism>
    <name type="scientific">Arabidopsis thaliana</name>
    <name type="common">Mouse-ear cress</name>
    <dbReference type="NCBI Taxonomy" id="3702"/>
    <lineage>
        <taxon>Eukaryota</taxon>
        <taxon>Viridiplantae</taxon>
        <taxon>Streptophyta</taxon>
        <taxon>Embryophyta</taxon>
        <taxon>Tracheophyta</taxon>
        <taxon>Spermatophyta</taxon>
        <taxon>Magnoliopsida</taxon>
        <taxon>eudicotyledons</taxon>
        <taxon>Gunneridae</taxon>
        <taxon>Pentapetalae</taxon>
        <taxon>rosids</taxon>
        <taxon>malvids</taxon>
        <taxon>Brassicales</taxon>
        <taxon>Brassicaceae</taxon>
        <taxon>Camelineae</taxon>
        <taxon>Arabidopsis</taxon>
    </lineage>
</organism>
<keyword id="KW-0002">3D-structure</keyword>
<keyword id="KW-0067">ATP-binding</keyword>
<keyword id="KW-0150">Chloroplast</keyword>
<keyword id="KW-0460">Magnesium</keyword>
<keyword id="KW-0479">Metal-binding</keyword>
<keyword id="KW-0547">Nucleotide-binding</keyword>
<keyword id="KW-0934">Plastid</keyword>
<keyword id="KW-1185">Reference proteome</keyword>
<keyword id="KW-0804">Transcription</keyword>
<keyword id="KW-0805">Transcription regulation</keyword>
<keyword id="KW-0809">Transit peptide</keyword>
<comment type="function">
    <text evidence="3 6 7">Participates in sensing carbon and organic nitrogen status and regulates some steps of primary carbon and nitrogen metabolism. Required for nitrite uptake in chloroplasts and regulates arginine biosynthesis through interaction with acetylglutamate kinase (NAGK) in chloroplasts. Regulates fatty acids synthesis in chloroplasts by interacting with the acetyl-CoA carboxylase complex and inhibiting acetyl-CoA carboxylase (ACCase) activity.</text>
</comment>
<comment type="subunit">
    <text evidence="4 5">Homodimer. Interacts with NAGK. Interaction with NAGK is dependent of MgATP and inhibited by 2-oxoglutarate, arginine, glutamate, citrate, and oxaloacetate.</text>
</comment>
<comment type="interaction">
    <interactant intactId="EBI-701245">
        <id>Q9ZST4</id>
    </interactant>
    <interactant intactId="EBI-15823091">
        <id>Q9LLC1</id>
        <label>BCCP2</label>
    </interactant>
    <organismsDiffer>false</organismsDiffer>
    <experiments>2</experiments>
</comment>
<comment type="interaction">
    <interactant intactId="EBI-701245">
        <id>Q9ZST4</id>
    </interactant>
    <interactant intactId="EBI-701276">
        <id>Q9SCL7</id>
        <label>NAGK</label>
    </interactant>
    <organismsDiffer>false</organismsDiffer>
    <experiments>5</experiments>
</comment>
<comment type="subcellular location">
    <subcellularLocation>
        <location evidence="2 4 7">Plastid</location>
        <location evidence="2 4 7">Chloroplast</location>
    </subcellularLocation>
</comment>
<comment type="induction">
    <text evidence="7">By light and sucrose. Down-regulated by treatment with amino acids.</text>
</comment>
<comment type="disruption phenotype">
    <text evidence="3">No visible phenotype under normal growth condition, but increased sensitivity to elevated levels of nitrite.</text>
</comment>
<comment type="similarity">
    <text evidence="2">Belongs to the P(II) protein family.</text>
</comment>
<protein>
    <recommendedName>
        <fullName>Nitrogen regulatory protein P-II homolog</fullName>
    </recommendedName>
    <alternativeName>
        <fullName>Protein PII-like</fullName>
    </alternativeName>
</protein>
<evidence type="ECO:0000255" key="1"/>
<evidence type="ECO:0000255" key="2">
    <source>
        <dbReference type="PROSITE-ProRule" id="PRU00675"/>
    </source>
</evidence>
<evidence type="ECO:0000269" key="3">
    <source>
    </source>
</evidence>
<evidence type="ECO:0000269" key="4">
    <source>
    </source>
</evidence>
<evidence type="ECO:0000269" key="5">
    <source>
    </source>
</evidence>
<evidence type="ECO:0000269" key="6">
    <source>
    </source>
</evidence>
<evidence type="ECO:0000269" key="7">
    <source>
    </source>
</evidence>
<evidence type="ECO:0007829" key="8">
    <source>
        <dbReference type="PDB" id="2O66"/>
    </source>
</evidence>
<evidence type="ECO:0007829" key="9">
    <source>
        <dbReference type="PDB" id="2RD5"/>
    </source>
</evidence>
<sequence length="196" mass="21275">MAASMTKPISITSLGFYSDRKNIAFSDCISICSGFRHSRPSCLDLVTKSPSNNSRVLPVVSAQISSDYIPDSKFYKVEAIVRPWRIQQVSSALLKIGIRGVTVSDVRGFGAQGGSTERHGGSEFSEDKFVAKVKMEIVVKKDQVESVINTIIEGARTGEIGDGKIFVLPVSDVIRVRTGERGEKAEKMTGDMLSPS</sequence>